<accession>A7YH32</accession>
<organism>
    <name type="scientific">Canis lupus familiaris</name>
    <name type="common">Dog</name>
    <name type="synonym">Canis familiaris</name>
    <dbReference type="NCBI Taxonomy" id="9615"/>
    <lineage>
        <taxon>Eukaryota</taxon>
        <taxon>Metazoa</taxon>
        <taxon>Chordata</taxon>
        <taxon>Craniata</taxon>
        <taxon>Vertebrata</taxon>
        <taxon>Euteleostomi</taxon>
        <taxon>Mammalia</taxon>
        <taxon>Eutheria</taxon>
        <taxon>Laurasiatheria</taxon>
        <taxon>Carnivora</taxon>
        <taxon>Caniformia</taxon>
        <taxon>Canidae</taxon>
        <taxon>Canis</taxon>
    </lineage>
</organism>
<comment type="function">
    <text evidence="1">Probably plays a role in the formation and regulation of the tight junction (TJ) paracellular permeability barrier.</text>
</comment>
<comment type="subunit">
    <text evidence="3">Homodimer (By similarity). Interacts with TJP1/ZO1 and SPEF1 (By similarity).</text>
</comment>
<comment type="subcellular location">
    <subcellularLocation>
        <location evidence="2">Cell junction</location>
        <location evidence="2">Tight junction</location>
    </subcellularLocation>
    <text evidence="2 3">Localizes to the apical junction complex composed of tight and adherens junctions. Colocalizes with SPEF1 at sites of cell-cell contact in intestinal epithelial cells.</text>
</comment>
<comment type="domain">
    <text evidence="1">Deletion of the TJP1/ZO1 interaction motif (ZIM) decreases but does not abolish colocalization with TJP1/ZO1.</text>
</comment>
<comment type="similarity">
    <text evidence="6">Belongs to the cingulin family.</text>
</comment>
<comment type="caution">
    <text evidence="6">It is uncertain whether Met-1 or Met-7 is the initiator.</text>
</comment>
<comment type="sequence caution" evidence="6">
    <conflict type="erroneous initiation">
        <sequence resource="EMBL-CDS" id="ABI95366"/>
    </conflict>
    <text>Truncated N-terminus.</text>
</comment>
<name>CING_CANLF</name>
<reference key="1">
    <citation type="journal article" date="2008" name="Mol. Membr. Biol.">
        <title>Inducible overexpression of cingulin in stably transfected MDCK cells does not affect tight junction organization and gene expression.</title>
        <authorList>
            <person name="Paschoud S."/>
            <person name="Citi S."/>
        </authorList>
    </citation>
    <scope>NUCLEOTIDE SEQUENCE [MRNA]</scope>
</reference>
<gene>
    <name evidence="3" type="primary">CGN</name>
</gene>
<dbReference type="EMBL" id="DQ910799">
    <property type="protein sequence ID" value="ABI95366.1"/>
    <property type="status" value="ALT_INIT"/>
    <property type="molecule type" value="mRNA"/>
</dbReference>
<dbReference type="RefSeq" id="NP_001096687.1">
    <property type="nucleotide sequence ID" value="NM_001103217.1"/>
</dbReference>
<dbReference type="RefSeq" id="XP_038546426.1">
    <property type="nucleotide sequence ID" value="XM_038690498.1"/>
</dbReference>
<dbReference type="RefSeq" id="XP_038546427.1">
    <property type="nucleotide sequence ID" value="XM_038690499.1"/>
</dbReference>
<dbReference type="RefSeq" id="XP_038546428.1">
    <property type="nucleotide sequence ID" value="XM_038690500.1"/>
</dbReference>
<dbReference type="SMR" id="A7YH32"/>
<dbReference type="FunCoup" id="A7YH32">
    <property type="interactions" value="161"/>
</dbReference>
<dbReference type="STRING" id="9615.ENSCAFP00000018714"/>
<dbReference type="PaxDb" id="9612-ENSCAFP00000018714"/>
<dbReference type="Ensembl" id="ENSCAFT00000020176.5">
    <property type="protein sequence ID" value="ENSCAFP00000018714.4"/>
    <property type="gene ID" value="ENSCAFG00000012729.5"/>
</dbReference>
<dbReference type="Ensembl" id="ENSCAFT00845041833.1">
    <property type="protein sequence ID" value="ENSCAFP00845032813.1"/>
    <property type="gene ID" value="ENSCAFG00845023683.1"/>
</dbReference>
<dbReference type="GeneID" id="483198"/>
<dbReference type="KEGG" id="cfa:483198"/>
<dbReference type="CTD" id="57530"/>
<dbReference type="VGNC" id="VGNC:39183">
    <property type="gene designation" value="CGN"/>
</dbReference>
<dbReference type="eggNOG" id="ENOG502R9EI">
    <property type="taxonomic scope" value="Eukaryota"/>
</dbReference>
<dbReference type="GeneTree" id="ENSGT00940000162698"/>
<dbReference type="InParanoid" id="A7YH32"/>
<dbReference type="OrthoDB" id="6108017at2759"/>
<dbReference type="Reactome" id="R-CFA-2173791">
    <property type="pathway name" value="TGF-beta receptor signaling in EMT (epithelial to mesenchymal transition)"/>
</dbReference>
<dbReference type="Proteomes" id="UP000002254">
    <property type="component" value="Chromosome 17"/>
</dbReference>
<dbReference type="Proteomes" id="UP000694429">
    <property type="component" value="Unplaced"/>
</dbReference>
<dbReference type="Proteomes" id="UP000694542">
    <property type="component" value="Unplaced"/>
</dbReference>
<dbReference type="Proteomes" id="UP000805418">
    <property type="component" value="Chromosome 17"/>
</dbReference>
<dbReference type="GO" id="GO:0005923">
    <property type="term" value="C:bicellular tight junction"/>
    <property type="evidence" value="ECO:0000318"/>
    <property type="project" value="GO_Central"/>
</dbReference>
<dbReference type="GO" id="GO:0016459">
    <property type="term" value="C:myosin complex"/>
    <property type="evidence" value="ECO:0007669"/>
    <property type="project" value="InterPro"/>
</dbReference>
<dbReference type="GO" id="GO:0008017">
    <property type="term" value="F:microtubule binding"/>
    <property type="evidence" value="ECO:0000318"/>
    <property type="project" value="GO_Central"/>
</dbReference>
<dbReference type="GO" id="GO:0000226">
    <property type="term" value="P:microtubule cytoskeleton organization"/>
    <property type="evidence" value="ECO:0000318"/>
    <property type="project" value="GO_Central"/>
</dbReference>
<dbReference type="InterPro" id="IPR002928">
    <property type="entry name" value="Myosin_tail"/>
</dbReference>
<dbReference type="PANTHER" id="PTHR46349:SF4">
    <property type="entry name" value="CINGULIN"/>
    <property type="match status" value="1"/>
</dbReference>
<dbReference type="PANTHER" id="PTHR46349">
    <property type="entry name" value="CINGULIN-LIKE PROTEIN 1-RELATED"/>
    <property type="match status" value="1"/>
</dbReference>
<dbReference type="Pfam" id="PF01576">
    <property type="entry name" value="Myosin_tail_1"/>
    <property type="match status" value="1"/>
</dbReference>
<keyword id="KW-0007">Acetylation</keyword>
<keyword id="KW-0965">Cell junction</keyword>
<keyword id="KW-0175">Coiled coil</keyword>
<keyword id="KW-0597">Phosphoprotein</keyword>
<keyword id="KW-1185">Reference proteome</keyword>
<keyword id="KW-0796">Tight junction</keyword>
<feature type="chain" id="PRO_0000371428" description="Cingulin">
    <location>
        <begin position="1"/>
        <end position="1196"/>
    </location>
</feature>
<feature type="region of interest" description="Head" evidence="1">
    <location>
        <begin position="7"/>
        <end position="354"/>
    </location>
</feature>
<feature type="region of interest" description="Interaction with TJP1/ZO1" evidence="3">
    <location>
        <begin position="54"/>
        <end position="67"/>
    </location>
</feature>
<feature type="region of interest" description="Disordered" evidence="5">
    <location>
        <begin position="82"/>
        <end position="105"/>
    </location>
</feature>
<feature type="region of interest" description="Disordered" evidence="5">
    <location>
        <begin position="183"/>
        <end position="263"/>
    </location>
</feature>
<feature type="region of interest" description="Disordered" evidence="5">
    <location>
        <begin position="884"/>
        <end position="906"/>
    </location>
</feature>
<feature type="region of interest" description="Disordered" evidence="5">
    <location>
        <begin position="1023"/>
        <end position="1061"/>
    </location>
</feature>
<feature type="region of interest" description="Disordered" evidence="5">
    <location>
        <begin position="1149"/>
        <end position="1174"/>
    </location>
</feature>
<feature type="region of interest" description="Tail" evidence="1">
    <location>
        <begin position="1155"/>
        <end position="1196"/>
    </location>
</feature>
<feature type="coiled-coil region" evidence="4">
    <location>
        <begin position="355"/>
        <end position="1150"/>
    </location>
</feature>
<feature type="short sequence motif" description="ZIM">
    <location>
        <begin position="48"/>
        <end position="62"/>
    </location>
</feature>
<feature type="compositionally biased region" description="Polar residues" evidence="5">
    <location>
        <begin position="95"/>
        <end position="105"/>
    </location>
</feature>
<feature type="compositionally biased region" description="Basic and acidic residues" evidence="5">
    <location>
        <begin position="218"/>
        <end position="231"/>
    </location>
</feature>
<feature type="compositionally biased region" description="Polar residues" evidence="5">
    <location>
        <begin position="245"/>
        <end position="256"/>
    </location>
</feature>
<feature type="compositionally biased region" description="Basic and acidic residues" evidence="5">
    <location>
        <begin position="884"/>
        <end position="897"/>
    </location>
</feature>
<feature type="compositionally biased region" description="Low complexity" evidence="5">
    <location>
        <begin position="1038"/>
        <end position="1050"/>
    </location>
</feature>
<feature type="compositionally biased region" description="Basic and acidic residues" evidence="5">
    <location>
        <begin position="1051"/>
        <end position="1061"/>
    </location>
</feature>
<feature type="modified residue" description="Phosphoserine" evidence="2">
    <location>
        <position position="95"/>
    </location>
</feature>
<feature type="modified residue" description="Phosphoserine" evidence="2">
    <location>
        <position position="96"/>
    </location>
</feature>
<feature type="modified residue" description="Phosphoserine" evidence="2">
    <location>
        <position position="98"/>
    </location>
</feature>
<feature type="modified residue" description="Phosphoserine" evidence="3">
    <location>
        <position position="135"/>
    </location>
</feature>
<feature type="modified residue" description="Phosphoserine" evidence="3">
    <location>
        <position position="137"/>
    </location>
</feature>
<feature type="modified residue" description="Phosphoserine" evidence="3">
    <location>
        <position position="140"/>
    </location>
</feature>
<feature type="modified residue" description="Phosphoserine" evidence="3">
    <location>
        <position position="155"/>
    </location>
</feature>
<feature type="modified residue" description="Phosphoserine" evidence="3">
    <location>
        <position position="165"/>
    </location>
</feature>
<feature type="modified residue" description="Phosphoserine" evidence="3">
    <location>
        <position position="214"/>
    </location>
</feature>
<feature type="modified residue" description="Phosphoserine" evidence="3">
    <location>
        <position position="274"/>
    </location>
</feature>
<feature type="modified residue" description="N6-acetyllysine" evidence="3">
    <location>
        <position position="576"/>
    </location>
</feature>
<feature type="modified residue" description="Phosphoserine" evidence="3">
    <location>
        <position position="1168"/>
    </location>
</feature>
<feature type="modified residue" description="Phosphoserine" evidence="3">
    <location>
        <position position="1169"/>
    </location>
</feature>
<feature type="modified residue" description="Phosphoserine" evidence="3">
    <location>
        <position position="1175"/>
    </location>
</feature>
<sequence>MEQASTMAEPRGPVDHGVQIRFITEPVGNAEMDTLRRGGRRPAKDARANTYGVAVRVQGIAGQPFVVLNSGEQGSDSFGVQIKGTNNRGPPGALSSDSELPESTYSHAKEFPARSQGSMSDEELGAHWNGRLLRSQSQASLKGPAPVSPSTRSTSLLQLAPEVASPGSTIDTAPLSSVDSLINKFDSRQGGQARGRTGRRMRTLPPEQRKRSQSLDNRLPRDTLDEREHQFPTHWTPSTKRDSHMGNSKQSSQNQGPLGGFSCSRQTQDWVLQSFEEPRGRAWDPGMLQFKSTPDLLRDQQETAPPGSVDHVKATIYSILREGSSETETSVRRKVNLVLEQMQPLVMTSGSAKGLTGQSELSQKVEELQQKLDEEVKKRPKLESSRLGLERQLQEKAEECSQLQELLERRKGEAQQSTKELQNMKLLVDQSERVRCGLEAQVKELQDKLKQAQEPEPAKEALMKDLLEARELLEEVLEGKQRMEEHLRLRERELTALKGALKEEVASRDQEVEHVRQQCQRDAEQLRRSIQDATQDHAALEVERQKMSTLVRELQKELEETSEETGHWQSMFQKNKDELRATKQELLQLRMEKEEIEEELGEKIEVLQRELGQARAGAADTRQMEELKKELCQTQKELKELKEEQQNQEVAGRHRERELEKQLKVEADRGQGLEQQNLQLQKTLQQLRQDCEEASKAQVAAEAEVAVLGQRRAAVEVTLRETQEENDEFRRRILGLEQQLKEARGLAEGGEVAEARLRDKVQRLEAEKQRLEEALNAAQEEEGSLAAAKRALEARLEEAQRGLARLGQEQLALNRALEEEGKQREALRRSKAELEEQKRLLDKTVCQLNKELEQIGNDSKQALQQLQAQLEDYKEKARREVADAQRQAKEWATEAEKNSGGLSRLQDETQRLRQALQASQADRDTARLDKELLAQRLQGLEQEAENKKRSQDDRARQLKGLEEKVSRLEAELDEERSTVELLTERVTRGRDQVDQLRSELMQERSARQDLECDKISLERQNKDLKSRLASSEGFQKPSASLSQLESQNQELQERLQAEEREKTVLQSTNRKLERRVKELSIQIDDERQHVNDQKDQLSLRVKALKRQVDEAEEEIERLDGLRKKAQRELEEQHEVNEQLQARIKTLEKDSWRKASRSAAESAQREGLSSDEEFDSVYDPSSIASLLTESNLQTSSC</sequence>
<protein>
    <recommendedName>
        <fullName evidence="3">Cingulin</fullName>
    </recommendedName>
</protein>
<proteinExistence type="evidence at transcript level"/>
<evidence type="ECO:0000250" key="1"/>
<evidence type="ECO:0000250" key="2">
    <source>
        <dbReference type="UniProtKB" id="P59242"/>
    </source>
</evidence>
<evidence type="ECO:0000250" key="3">
    <source>
        <dbReference type="UniProtKB" id="Q9P2M7"/>
    </source>
</evidence>
<evidence type="ECO:0000255" key="4"/>
<evidence type="ECO:0000256" key="5">
    <source>
        <dbReference type="SAM" id="MobiDB-lite"/>
    </source>
</evidence>
<evidence type="ECO:0000305" key="6"/>